<organism>
    <name type="scientific">Xenopus laevis</name>
    <name type="common">African clawed frog</name>
    <dbReference type="NCBI Taxonomy" id="8355"/>
    <lineage>
        <taxon>Eukaryota</taxon>
        <taxon>Metazoa</taxon>
        <taxon>Chordata</taxon>
        <taxon>Craniata</taxon>
        <taxon>Vertebrata</taxon>
        <taxon>Euteleostomi</taxon>
        <taxon>Amphibia</taxon>
        <taxon>Batrachia</taxon>
        <taxon>Anura</taxon>
        <taxon>Pipoidea</taxon>
        <taxon>Pipidae</taxon>
        <taxon>Xenopodinae</taxon>
        <taxon>Xenopus</taxon>
        <taxon>Xenopus</taxon>
    </lineage>
</organism>
<name>SURF6_XENLA</name>
<dbReference type="EMBL" id="AJ276843">
    <property type="protein sequence ID" value="CAB98154.1"/>
    <property type="molecule type" value="mRNA"/>
</dbReference>
<dbReference type="SMR" id="Q9I8B0"/>
<dbReference type="AGR" id="Xenbase:XB-GENE-969960"/>
<dbReference type="Xenbase" id="XB-GENE-969960">
    <property type="gene designation" value="surf6.L"/>
</dbReference>
<dbReference type="Proteomes" id="UP000186698">
    <property type="component" value="Unplaced"/>
</dbReference>
<dbReference type="GO" id="GO:0005730">
    <property type="term" value="C:nucleolus"/>
    <property type="evidence" value="ECO:0000318"/>
    <property type="project" value="GO_Central"/>
</dbReference>
<dbReference type="GO" id="GO:0003677">
    <property type="term" value="F:DNA binding"/>
    <property type="evidence" value="ECO:0000318"/>
    <property type="project" value="GO_Central"/>
</dbReference>
<dbReference type="GO" id="GO:0003723">
    <property type="term" value="F:RNA binding"/>
    <property type="evidence" value="ECO:0000318"/>
    <property type="project" value="GO_Central"/>
</dbReference>
<dbReference type="GO" id="GO:0042273">
    <property type="term" value="P:ribosomal large subunit biogenesis"/>
    <property type="evidence" value="ECO:0000318"/>
    <property type="project" value="GO_Central"/>
</dbReference>
<dbReference type="GO" id="GO:0042274">
    <property type="term" value="P:ribosomal small subunit biogenesis"/>
    <property type="evidence" value="ECO:0000318"/>
    <property type="project" value="GO_Central"/>
</dbReference>
<dbReference type="InterPro" id="IPR029190">
    <property type="entry name" value="Rrp14/SURF6_C"/>
</dbReference>
<dbReference type="InterPro" id="IPR007019">
    <property type="entry name" value="SURF6"/>
</dbReference>
<dbReference type="PANTHER" id="PTHR14369">
    <property type="entry name" value="SURFEIT LOCUS PROTEIN 6"/>
    <property type="match status" value="1"/>
</dbReference>
<dbReference type="PANTHER" id="PTHR14369:SF0">
    <property type="entry name" value="SURFEIT LOCUS PROTEIN 6"/>
    <property type="match status" value="1"/>
</dbReference>
<dbReference type="Pfam" id="PF04935">
    <property type="entry name" value="SURF6"/>
    <property type="match status" value="1"/>
</dbReference>
<keyword id="KW-0539">Nucleus</keyword>
<keyword id="KW-1185">Reference proteome</keyword>
<reference key="1">
    <citation type="submission" date="2000-03" db="EMBL/GenBank/DDBJ databases">
        <authorList>
            <person name="Wolff C.M."/>
        </authorList>
    </citation>
    <scope>NUCLEOTIDE SEQUENCE [MRNA]</scope>
</reference>
<accession>Q9I8B0</accession>
<protein>
    <recommendedName>
        <fullName>Surfeit locus protein 6 homolog</fullName>
    </recommendedName>
</protein>
<gene>
    <name type="primary">surf6</name>
</gene>
<sequence>MASLASKDSYLQKLAKKVCTQPSQEPRKRKNEFIKRDGSEEPGQPNKKKKKKPRNKKMKAQSDKRTWNVPQITSNPQKLAKNGQTPSSTGTAASSFSTVDILRKRLQEKIQESRSQLSNKSLTPEDAEKRRQRRKQERERKKRKRKELKKKAAQEPEGNEVKDTKESPETTKEKDPVPIVFNNVEVSDELPNKVMQKKAKKERVKGTITPMTGKNYKQLLSRLEARKCKLEELRAKDEGKAKEFESKIKWTNVLYKAEGVKIKDDEGMLKAALKRKEKKQKQREKRWDKRTELTADRMQQRQDKRRRNIMKKKQAKVDKKKNRARKKGRILPEDLAKANFK</sequence>
<comment type="function">
    <text evidence="1">Involved in a nucleolar function.</text>
</comment>
<comment type="subcellular location">
    <subcellularLocation>
        <location evidence="1">Nucleus</location>
        <location evidence="1">Nucleolus</location>
    </subcellularLocation>
</comment>
<comment type="similarity">
    <text evidence="3">Belongs to the SURF6 family.</text>
</comment>
<evidence type="ECO:0000250" key="1"/>
<evidence type="ECO:0000256" key="2">
    <source>
        <dbReference type="SAM" id="MobiDB-lite"/>
    </source>
</evidence>
<evidence type="ECO:0000305" key="3"/>
<feature type="chain" id="PRO_0000220972" description="Surfeit locus protein 6 homolog">
    <location>
        <begin position="1"/>
        <end position="341"/>
    </location>
</feature>
<feature type="region of interest" description="Disordered" evidence="2">
    <location>
        <begin position="16"/>
        <end position="98"/>
    </location>
</feature>
<feature type="region of interest" description="Disordered" evidence="2">
    <location>
        <begin position="110"/>
        <end position="184"/>
    </location>
</feature>
<feature type="region of interest" description="Disordered" evidence="2">
    <location>
        <begin position="191"/>
        <end position="210"/>
    </location>
</feature>
<feature type="region of interest" description="Disordered" evidence="2">
    <location>
        <begin position="273"/>
        <end position="341"/>
    </location>
</feature>
<feature type="compositionally biased region" description="Basic residues" evidence="2">
    <location>
        <begin position="46"/>
        <end position="59"/>
    </location>
</feature>
<feature type="compositionally biased region" description="Polar residues" evidence="2">
    <location>
        <begin position="68"/>
        <end position="77"/>
    </location>
</feature>
<feature type="compositionally biased region" description="Low complexity" evidence="2">
    <location>
        <begin position="85"/>
        <end position="98"/>
    </location>
</feature>
<feature type="compositionally biased region" description="Polar residues" evidence="2">
    <location>
        <begin position="113"/>
        <end position="122"/>
    </location>
</feature>
<feature type="compositionally biased region" description="Basic residues" evidence="2">
    <location>
        <begin position="130"/>
        <end position="149"/>
    </location>
</feature>
<feature type="compositionally biased region" description="Basic and acidic residues" evidence="2">
    <location>
        <begin position="150"/>
        <end position="176"/>
    </location>
</feature>
<feature type="compositionally biased region" description="Basic residues" evidence="2">
    <location>
        <begin position="273"/>
        <end position="284"/>
    </location>
</feature>
<feature type="compositionally biased region" description="Basic and acidic residues" evidence="2">
    <location>
        <begin position="285"/>
        <end position="302"/>
    </location>
</feature>
<feature type="compositionally biased region" description="Basic residues" evidence="2">
    <location>
        <begin position="303"/>
        <end position="329"/>
    </location>
</feature>
<feature type="compositionally biased region" description="Basic and acidic residues" evidence="2">
    <location>
        <begin position="330"/>
        <end position="341"/>
    </location>
</feature>
<proteinExistence type="evidence at transcript level"/>